<organism>
    <name type="scientific">Human immunodeficiency virus type 1 group M subtype B (strain 89.6)</name>
    <name type="common">HIV-1</name>
    <dbReference type="NCBI Taxonomy" id="401671"/>
    <lineage>
        <taxon>Viruses</taxon>
        <taxon>Riboviria</taxon>
        <taxon>Pararnavirae</taxon>
        <taxon>Artverviricota</taxon>
        <taxon>Revtraviricetes</taxon>
        <taxon>Ortervirales</taxon>
        <taxon>Retroviridae</taxon>
        <taxon>Orthoretrovirinae</taxon>
        <taxon>Lentivirus</taxon>
        <taxon>Human immunodeficiency virus type 1</taxon>
    </lineage>
</organism>
<proteinExistence type="inferred from homology"/>
<accession>Q89842</accession>
<sequence length="204" mass="23382">MGGKWSKRRAEGWQTIRERMRRAEPAEPAADGVGAVSRDLARHGAITSSNTNNADIAWLEAQEEGEVGFPVRPQVPLRPMTYKAAVDLSHFLKEKGGLEGLVHSQKRQDILDLWVYHTQGFFPDWQNYTPGPGIRYPLTFGWCYKLVPVEPDEGENNREDNSLLHPANQHGVEDSERQVLVWRFDSRLAFHHVARELHPEYFKN</sequence>
<dbReference type="EMBL" id="U39362">
    <property type="protein sequence ID" value="AAA81044.1"/>
    <property type="molecule type" value="Genomic_DNA"/>
</dbReference>
<dbReference type="SMR" id="Q89842"/>
<dbReference type="Proteomes" id="UP000007691">
    <property type="component" value="Genome"/>
</dbReference>
<dbReference type="GO" id="GO:0005576">
    <property type="term" value="C:extracellular region"/>
    <property type="evidence" value="ECO:0007669"/>
    <property type="project" value="UniProtKB-SubCell"/>
</dbReference>
<dbReference type="GO" id="GO:0044178">
    <property type="term" value="C:host cell Golgi membrane"/>
    <property type="evidence" value="ECO:0007669"/>
    <property type="project" value="UniProtKB-SubCell"/>
</dbReference>
<dbReference type="GO" id="GO:0020002">
    <property type="term" value="C:host cell plasma membrane"/>
    <property type="evidence" value="ECO:0007669"/>
    <property type="project" value="UniProtKB-SubCell"/>
</dbReference>
<dbReference type="GO" id="GO:0016020">
    <property type="term" value="C:membrane"/>
    <property type="evidence" value="ECO:0007669"/>
    <property type="project" value="UniProtKB-UniRule"/>
</dbReference>
<dbReference type="GO" id="GO:0044423">
    <property type="term" value="C:virion component"/>
    <property type="evidence" value="ECO:0007669"/>
    <property type="project" value="UniProtKB-UniRule"/>
</dbReference>
<dbReference type="GO" id="GO:0005525">
    <property type="term" value="F:GTP binding"/>
    <property type="evidence" value="ECO:0007669"/>
    <property type="project" value="UniProtKB-UniRule"/>
</dbReference>
<dbReference type="GO" id="GO:0017124">
    <property type="term" value="F:SH3 domain binding"/>
    <property type="evidence" value="ECO:0007669"/>
    <property type="project" value="UniProtKB-UniRule"/>
</dbReference>
<dbReference type="GO" id="GO:0046776">
    <property type="term" value="P:symbiont-mediated suppression of host antigen processing and presentation of peptide antigen via MHC class I"/>
    <property type="evidence" value="ECO:0007669"/>
    <property type="project" value="UniProtKB-UniRule"/>
</dbReference>
<dbReference type="GO" id="GO:0039505">
    <property type="term" value="P:symbiont-mediated suppression of host antigen processing and presentation of peptide antigen via MHC class II"/>
    <property type="evidence" value="ECO:0007669"/>
    <property type="project" value="UniProtKB-UniRule"/>
</dbReference>
<dbReference type="GO" id="GO:0140321">
    <property type="term" value="P:symbiont-mediated suppression of host autophagy"/>
    <property type="evidence" value="ECO:0007669"/>
    <property type="project" value="UniProtKB-KW"/>
</dbReference>
<dbReference type="Gene3D" id="4.10.890.10">
    <property type="entry name" value="HIV 1 nef anchor domain"/>
    <property type="match status" value="1"/>
</dbReference>
<dbReference type="Gene3D" id="3.30.62.10">
    <property type="entry name" value="Nef Regulatory Factor"/>
    <property type="match status" value="1"/>
</dbReference>
<dbReference type="HAMAP" id="MF_04078">
    <property type="entry name" value="NEF_HIV"/>
    <property type="match status" value="1"/>
</dbReference>
<dbReference type="InterPro" id="IPR027480">
    <property type="entry name" value="HIV-1_Nef_anchor_sf"/>
</dbReference>
<dbReference type="InterPro" id="IPR027481">
    <property type="entry name" value="HIV-1_Nef_core_sf"/>
</dbReference>
<dbReference type="InterPro" id="IPR001558">
    <property type="entry name" value="HIV_Nef"/>
</dbReference>
<dbReference type="Pfam" id="PF00469">
    <property type="entry name" value="F-protein"/>
    <property type="match status" value="1"/>
</dbReference>
<dbReference type="SUPFAM" id="SSF55671">
    <property type="entry name" value="Regulatory factor Nef"/>
    <property type="match status" value="1"/>
</dbReference>
<gene>
    <name evidence="1" type="primary">nef</name>
</gene>
<feature type="initiator methionine" description="Removed; by host" evidence="1">
    <location>
        <position position="1"/>
    </location>
</feature>
<feature type="chain" id="PRO_0000250962" description="Protein Nef" evidence="1">
    <location>
        <begin position="2"/>
        <end position="204"/>
    </location>
</feature>
<feature type="chain" id="PRO_0000250963" description="C-terminal core protein" evidence="1">
    <location>
        <begin position="59"/>
        <end position="204"/>
    </location>
</feature>
<feature type="region of interest" description="Disordered" evidence="2">
    <location>
        <begin position="1"/>
        <end position="33"/>
    </location>
</feature>
<feature type="region of interest" description="Acidic; interacts with host PACS1 and PACS2; stabilizes the interaction of NEF/MHC-I with host AP1M1; necessary for MHC-I internalization" evidence="1">
    <location>
        <begin position="63"/>
        <end position="66"/>
    </location>
</feature>
<feature type="region of interest" description="SH3-binding; interaction with Src family tyrosine kinases" evidence="1">
    <location>
        <begin position="70"/>
        <end position="79"/>
    </location>
</feature>
<feature type="region of interest" description="Mediates dimerization, Nef-PTE1 interaction" evidence="1">
    <location>
        <begin position="109"/>
        <end position="125"/>
    </location>
</feature>
<feature type="region of interest" description="Binding to ATP6V1H" evidence="1">
    <location>
        <begin position="149"/>
        <end position="179"/>
    </location>
</feature>
<feature type="short sequence motif" description="PxxP; stabilizes the interaction of NEF/MHC-I with host AP1M1; necessary for MHC-I internalization" evidence="1">
    <location>
        <begin position="73"/>
        <end position="76"/>
    </location>
</feature>
<feature type="short sequence motif" description="Dileucine internalization motif; necessary for CD4 internalization" evidence="1">
    <location>
        <begin position="163"/>
        <end position="164"/>
    </location>
</feature>
<feature type="short sequence motif" description="Diacidic; necessary for CD4 internalization" evidence="1">
    <location>
        <begin position="173"/>
        <end position="174"/>
    </location>
</feature>
<feature type="compositionally biased region" description="Basic and acidic residues" evidence="2">
    <location>
        <begin position="8"/>
        <end position="25"/>
    </location>
</feature>
<feature type="site" description="Might play a role in AP-1 recruitment to the Nef-MHC-I complex" evidence="1">
    <location>
        <position position="20"/>
    </location>
</feature>
<feature type="site" description="Cleavage; by viral protease" evidence="1">
    <location>
        <begin position="58"/>
        <end position="59"/>
    </location>
</feature>
<feature type="modified residue" description="Phosphoserine; by host" evidence="1">
    <location>
        <position position="6"/>
    </location>
</feature>
<feature type="lipid moiety-binding region" description="N-myristoyl glycine; by host" evidence="1">
    <location>
        <position position="2"/>
    </location>
</feature>
<name>NEF_HV1B9</name>
<comment type="function">
    <text evidence="1">Factor of infectivity and pathogenicity, required for optimal virus replication. Alters numerous pathways of T-lymphocyte function and down-regulates immunity surface molecules in order to evade host defense and increase viral infectivity. Alters the functionality of other immunity cells, like dendritic cells, monocytes/macrophages and NK cells.</text>
</comment>
<comment type="function">
    <text evidence="1">In infected CD4(+) T-lymphocytes, down-regulates the surface MHC-I, mature MHC-II, CD4, CD28, CCR5 and CXCR4 molecules. Mediates internalization and degradation of host CD4 through the interaction of with the cytoplasmic tail of CD4, the recruitment of AP-2 (clathrin adapter protein complex 2), internalization through clathrin coated pits, and subsequent transport to endosomes and lysosomes for degradation. Diverts host MHC-I molecules to the trans-Golgi network-associated endosomal compartments by an endocytic pathway to finally target them for degradation. MHC-I down-regulation may involve AP-1 (clathrin adapter protein complex 1) or possibly Src family kinase-ZAP70/Syk-PI3K cascade recruited by PACS2. In consequence infected cells are masked for immune recognition by cytotoxic T-lymphocytes. Decreasing the number of immune receptors also prevents reinfection by more HIV particles (superinfection). Down-regulates host SERINC3 and SERINC5 thereby excluding these proteins from the viral particles. Virion infectivity is drastically higher when SERINC3 or SERINC5 are excluded from the viral envelope, because these host antiviral proteins impair the membrane fusion event necessary for subsequent virion penetration.</text>
</comment>
<comment type="function">
    <text evidence="1">Bypasses host T-cell signaling by inducing a transcriptional program nearly identical to that of anti-CD3 cell activation. Interaction with TCR-zeta chain up-regulates the Fas ligand (FasL). Increasing surface FasL molecules and decreasing surface MHC-I molecules on infected CD4(+) cells send attacking cytotoxic CD8+ T-lymphocytes into apoptosis.</text>
</comment>
<comment type="function">
    <text evidence="1">Plays a role in optimizing the host cell environment for viral replication without causing cell death by apoptosis. Protects the infected cells from apoptosis in order to keep them alive until the next virus generation is ready to strike. Inhibits the Fas and TNFR-mediated death signals by blocking MAP3K5/ASK1. Decreases the half-life of TP53, protecting the infected cell against p53-mediated apoptosis. Inhibits the apoptotic signals regulated by the Bcl-2 family proteins through the formation of a Nef/PI3-kinase/PAK2 complex that leads to activation of PAK2 and induces phosphorylation of host BAD.</text>
</comment>
<comment type="function">
    <text evidence="1">Extracellular Nef protein targets CD4(+) T-lymphocytes for apoptosis by interacting with CXCR4 surface receptors.</text>
</comment>
<comment type="subunit">
    <text evidence="1">Monomer; cytosolic form. Homodimer; membrane bound form. Interacts with Nef associated p21-activated kinase (PAK2); this interaction activates PAK2. Associates with the Nef-MHC-I-AP1 complex; this complex is required for MHC-I internalization. Interacts (via C-terminus) with host PI3-kinase. Interacts with host PACS1; this interaction seems to be weak. Interacts with host PACS2. Interacts with host LCK and MAPK3; these interactions inhibit the kinase activity of the latter. Interacts with host ATP6V1H; this interaction may play a role in CD4 endocytosis. Associates with the CD4-Nef-AP2 complex; this complex is required for CD4 internalization. Interacts with host AP2 subunit alpha and AP2 subunit sigma2. Interacts with TCR-zeta chain; this interaction up-regulates the Fas ligand (FasL) surface expression. Interacts with host HCK, LYN, and SRC; these interactions activate the Src family kinases. Interacts with MAP3K5; this interaction inhibits the Fas and TNFR-mediated death signals. Interacts with beta-COP and PTE1. Interacts with human RACK1; this increases Nef phosphorylation by PKC. Interacts with TP53; this interaction decreases the half-life of TP53, protecting the infected cell against p53-mediated apoptosis.</text>
</comment>
<comment type="subcellular location">
    <subcellularLocation>
        <location evidence="1">Host cell membrane</location>
        <topology evidence="1">Lipid-anchor</topology>
        <orientation evidence="1">Cytoplasmic side</orientation>
    </subcellularLocation>
    <subcellularLocation>
        <location evidence="1">Virion</location>
    </subcellularLocation>
    <subcellularLocation>
        <location evidence="1">Secreted</location>
    </subcellularLocation>
    <subcellularLocation>
        <location evidence="1">Host Golgi apparatus membrane</location>
    </subcellularLocation>
    <text evidence="1">TGN localization requires PACS1. Associates with the inner plasma membrane through its N-terminal domain. Nef stimulates its own export via the release of exosomes. Incorporated in virions at a rate of about 10 molecules per virion, where it is cleaved.</text>
</comment>
<comment type="induction">
    <text evidence="1">Expressed early in the viral replication cycle.</text>
</comment>
<comment type="domain">
    <text evidence="1">The N-terminal domain is composed of the N-myristoyl glycine and of a cluster of positively charged amino acids. It is required for inner plasma membrane targeting of Nef and virion incorporation, and thereby for infectivity. This domain is also involved in binding to TP53.</text>
</comment>
<comment type="domain">
    <text evidence="1">The SH3-binding domain constituted of PxxP motifs mediates binding to several Src family proteins thereby regulating their tyrosine kinase activity. The same motifs also mediates the association with MAPK3, PI3-kinase and TCR-zeta.</text>
</comment>
<comment type="domain">
    <text evidence="1">The dileucine internalization motif and a diacidic motif seem to be required for binding to AP-2.</text>
</comment>
<comment type="domain">
    <text evidence="1">The acidic region binds to the sorting protein PACS-2, which targets Nef to the paranuclear region, enabling the PxxP motif to direct assembly of an SFK/ZAP-70/PI3K complex that accelerates endocytosis of cell-surface MHC-I.</text>
</comment>
<comment type="PTM">
    <text evidence="1">The virion-associated Nef proteins are cleaved by the viral protease to release the soluble C-terminal core protein. Nef is probably cleaved concomitantly with viral structural proteins on maturation of virus particles.</text>
</comment>
<comment type="PTM">
    <text evidence="1">Myristoylated.</text>
</comment>
<comment type="PTM">
    <text evidence="1">Phosphorylated on serine residues, probably by host PKCdelta and theta.</text>
</comment>
<comment type="miscellaneous">
    <text evidence="1">HIV-1 lineages are divided in three main groups, M (for Major), O (for Outlier), and N (for New, or Non-M, Non-O). The vast majority of strains found worldwide belong to the group M. Group O seems to be endemic to and largely confined to Cameroon and neighboring countries in West Central Africa, where these viruses represent a small minority of HIV-1 strains. The group N is represented by a limited number of isolates from Cameroonian persons. The group M is further subdivided in 9 clades or subtypes (A to D, F to H, J and K).</text>
</comment>
<comment type="similarity">
    <text evidence="1">Belongs to the lentivirus primate group Nef protein family.</text>
</comment>
<evidence type="ECO:0000255" key="1">
    <source>
        <dbReference type="HAMAP-Rule" id="MF_04078"/>
    </source>
</evidence>
<evidence type="ECO:0000256" key="2">
    <source>
        <dbReference type="SAM" id="MobiDB-lite"/>
    </source>
</evidence>
<organismHost>
    <name type="scientific">Homo sapiens</name>
    <name type="common">Human</name>
    <dbReference type="NCBI Taxonomy" id="9606"/>
</organismHost>
<reference key="1">
    <citation type="journal article" date="1992" name="J. Virol.">
        <title>An infectious molecular clone of an unusual macrophage-tropic and highly cytopathic strain of human immunodeficiency virus type 1.</title>
        <authorList>
            <person name="Collman R."/>
            <person name="Balliet J.W."/>
            <person name="Gregory S.A."/>
            <person name="Friedman H."/>
            <person name="Kolson D.L."/>
            <person name="Nathanson N."/>
            <person name="Srinivasan A."/>
        </authorList>
    </citation>
    <scope>NUCLEOTIDE SEQUENCE [GENOMIC DNA]</scope>
</reference>
<keyword id="KW-0014">AIDS</keyword>
<keyword id="KW-0053">Apoptosis</keyword>
<keyword id="KW-0244">Early protein</keyword>
<keyword id="KW-1032">Host cell membrane</keyword>
<keyword id="KW-1040">Host Golgi apparatus</keyword>
<keyword id="KW-1043">Host membrane</keyword>
<keyword id="KW-0945">Host-virus interaction</keyword>
<keyword id="KW-1080">Inhibition of host adaptive immune response by virus</keyword>
<keyword id="KW-1083">Inhibition of host autophagy by virus</keyword>
<keyword id="KW-1115">Inhibition of host MHC class I molecule presentation by virus</keyword>
<keyword id="KW-1116">Inhibition of host MHC class II molecule presentation by virus</keyword>
<keyword id="KW-0449">Lipoprotein</keyword>
<keyword id="KW-0472">Membrane</keyword>
<keyword id="KW-0519">Myristate</keyword>
<keyword id="KW-0597">Phosphoprotein</keyword>
<keyword id="KW-1185">Reference proteome</keyword>
<keyword id="KW-0964">Secreted</keyword>
<keyword id="KW-0729">SH3-binding</keyword>
<keyword id="KW-0899">Viral immunoevasion</keyword>
<keyword id="KW-0946">Virion</keyword>
<keyword id="KW-0843">Virulence</keyword>
<protein>
    <recommendedName>
        <fullName evidence="1">Protein Nef</fullName>
    </recommendedName>
    <alternativeName>
        <fullName evidence="1">3'ORF</fullName>
    </alternativeName>
    <alternativeName>
        <fullName evidence="1">Negative factor</fullName>
        <shortName evidence="1">F-protein</shortName>
    </alternativeName>
    <component>
        <recommendedName>
            <fullName evidence="1">C-terminal core protein</fullName>
        </recommendedName>
    </component>
</protein>